<comment type="function">
    <text evidence="1">Catalyzes the S-adenosylmethionine monomethyl esterification of trans-aconitate.</text>
</comment>
<comment type="catalytic activity">
    <reaction evidence="1">
        <text>trans-aconitate + S-adenosyl-L-methionine = (E)-3-(methoxycarbonyl)pent-2-enedioate + S-adenosyl-L-homocysteine</text>
        <dbReference type="Rhea" id="RHEA:14969"/>
        <dbReference type="ChEBI" id="CHEBI:15708"/>
        <dbReference type="ChEBI" id="CHEBI:57470"/>
        <dbReference type="ChEBI" id="CHEBI:57856"/>
        <dbReference type="ChEBI" id="CHEBI:59789"/>
        <dbReference type="EC" id="2.1.1.144"/>
    </reaction>
</comment>
<comment type="subcellular location">
    <subcellularLocation>
        <location evidence="1">Cytoplasm</location>
    </subcellularLocation>
</comment>
<comment type="similarity">
    <text evidence="1">Belongs to the methyltransferase superfamily. Tam family.</text>
</comment>
<name>TAM_ACIET</name>
<evidence type="ECO:0000255" key="1">
    <source>
        <dbReference type="HAMAP-Rule" id="MF_00560"/>
    </source>
</evidence>
<organism>
    <name type="scientific">Acidovorax ebreus (strain TPSY)</name>
    <name type="common">Diaphorobacter sp. (strain TPSY)</name>
    <dbReference type="NCBI Taxonomy" id="535289"/>
    <lineage>
        <taxon>Bacteria</taxon>
        <taxon>Pseudomonadati</taxon>
        <taxon>Pseudomonadota</taxon>
        <taxon>Betaproteobacteria</taxon>
        <taxon>Burkholderiales</taxon>
        <taxon>Comamonadaceae</taxon>
        <taxon>Diaphorobacter</taxon>
    </lineage>
</organism>
<sequence>MHDWDPALYQRFESERTRPAVELLARVSHPAPRHIVDLGCGNGNSTQLLLERFPQSQLIGLDNSEAMLASARKRLPGVPFVQADIADWAPTVAPDLIFANASLQWVAGHAGLFARLMRCLAPGGVLAVQMPDNLDQPSHQLMRELASQSAWRDQLAHAADQRAALLSVEAYYDLLAPMACRVDIWHTAYRHVMPSVQAIVEWLESTGLKPFLDPLSAVLRDAYLQAYTQRIGEAYTKRADGHRLFAFPRLFIVAQRAP</sequence>
<accession>B9MBN9</accession>
<protein>
    <recommendedName>
        <fullName evidence="1">Trans-aconitate 2-methyltransferase</fullName>
        <ecNumber evidence="1">2.1.1.144</ecNumber>
    </recommendedName>
</protein>
<dbReference type="EC" id="2.1.1.144" evidence="1"/>
<dbReference type="EMBL" id="CP001392">
    <property type="protein sequence ID" value="ACM33718.1"/>
    <property type="molecule type" value="Genomic_DNA"/>
</dbReference>
<dbReference type="RefSeq" id="WP_015913699.1">
    <property type="nucleotide sequence ID" value="NC_011992.1"/>
</dbReference>
<dbReference type="SMR" id="B9MBN9"/>
<dbReference type="KEGG" id="dia:Dtpsy_2280"/>
<dbReference type="eggNOG" id="COG4106">
    <property type="taxonomic scope" value="Bacteria"/>
</dbReference>
<dbReference type="HOGENOM" id="CLU_037990_5_2_4"/>
<dbReference type="Proteomes" id="UP000000450">
    <property type="component" value="Chromosome"/>
</dbReference>
<dbReference type="GO" id="GO:0005737">
    <property type="term" value="C:cytoplasm"/>
    <property type="evidence" value="ECO:0007669"/>
    <property type="project" value="UniProtKB-SubCell"/>
</dbReference>
<dbReference type="GO" id="GO:0030798">
    <property type="term" value="F:trans-aconitate 2-methyltransferase activity"/>
    <property type="evidence" value="ECO:0007669"/>
    <property type="project" value="UniProtKB-UniRule"/>
</dbReference>
<dbReference type="GO" id="GO:0032259">
    <property type="term" value="P:methylation"/>
    <property type="evidence" value="ECO:0007669"/>
    <property type="project" value="UniProtKB-KW"/>
</dbReference>
<dbReference type="CDD" id="cd02440">
    <property type="entry name" value="AdoMet_MTases"/>
    <property type="match status" value="1"/>
</dbReference>
<dbReference type="Gene3D" id="1.10.150.290">
    <property type="entry name" value="S-adenosyl-L-methionine-dependent methyltransferases"/>
    <property type="match status" value="1"/>
</dbReference>
<dbReference type="Gene3D" id="3.40.50.150">
    <property type="entry name" value="Vaccinia Virus protein VP39"/>
    <property type="match status" value="1"/>
</dbReference>
<dbReference type="HAMAP" id="MF_00560">
    <property type="entry name" value="Tran_acon_Me_trans"/>
    <property type="match status" value="1"/>
</dbReference>
<dbReference type="InterPro" id="IPR041698">
    <property type="entry name" value="Methyltransf_25"/>
</dbReference>
<dbReference type="InterPro" id="IPR029063">
    <property type="entry name" value="SAM-dependent_MTases_sf"/>
</dbReference>
<dbReference type="InterPro" id="IPR023506">
    <property type="entry name" value="Trans-aconitate_MeTrfase"/>
</dbReference>
<dbReference type="InterPro" id="IPR023149">
    <property type="entry name" value="Trans_acon_MeTrfase_C"/>
</dbReference>
<dbReference type="NCBIfam" id="NF002463">
    <property type="entry name" value="PRK01683.1"/>
    <property type="match status" value="1"/>
</dbReference>
<dbReference type="PANTHER" id="PTHR43861:SF1">
    <property type="entry name" value="TRANS-ACONITATE 2-METHYLTRANSFERASE"/>
    <property type="match status" value="1"/>
</dbReference>
<dbReference type="PANTHER" id="PTHR43861">
    <property type="entry name" value="TRANS-ACONITATE 2-METHYLTRANSFERASE-RELATED"/>
    <property type="match status" value="1"/>
</dbReference>
<dbReference type="Pfam" id="PF13649">
    <property type="entry name" value="Methyltransf_25"/>
    <property type="match status" value="1"/>
</dbReference>
<dbReference type="SUPFAM" id="SSF53335">
    <property type="entry name" value="S-adenosyl-L-methionine-dependent methyltransferases"/>
    <property type="match status" value="1"/>
</dbReference>
<reference key="1">
    <citation type="submission" date="2009-01" db="EMBL/GenBank/DDBJ databases">
        <title>Complete sequence of Diaphorobacter sp. TPSY.</title>
        <authorList>
            <consortium name="US DOE Joint Genome Institute"/>
            <person name="Lucas S."/>
            <person name="Copeland A."/>
            <person name="Lapidus A."/>
            <person name="Glavina del Rio T."/>
            <person name="Tice H."/>
            <person name="Bruce D."/>
            <person name="Goodwin L."/>
            <person name="Pitluck S."/>
            <person name="Chertkov O."/>
            <person name="Brettin T."/>
            <person name="Detter J.C."/>
            <person name="Han C."/>
            <person name="Larimer F."/>
            <person name="Land M."/>
            <person name="Hauser L."/>
            <person name="Kyrpides N."/>
            <person name="Mikhailova N."/>
            <person name="Coates J.D."/>
        </authorList>
    </citation>
    <scope>NUCLEOTIDE SEQUENCE [LARGE SCALE GENOMIC DNA]</scope>
    <source>
        <strain>TPSY</strain>
    </source>
</reference>
<keyword id="KW-0963">Cytoplasm</keyword>
<keyword id="KW-0489">Methyltransferase</keyword>
<keyword id="KW-1185">Reference proteome</keyword>
<keyword id="KW-0949">S-adenosyl-L-methionine</keyword>
<keyword id="KW-0808">Transferase</keyword>
<feature type="chain" id="PRO_1000196653" description="Trans-aconitate 2-methyltransferase">
    <location>
        <begin position="1"/>
        <end position="258"/>
    </location>
</feature>
<gene>
    <name evidence="1" type="primary">tam</name>
    <name type="ordered locus">Dtpsy_2280</name>
</gene>
<proteinExistence type="inferred from homology"/>